<keyword id="KW-1185">Reference proteome</keyword>
<keyword id="KW-0687">Ribonucleoprotein</keyword>
<keyword id="KW-0689">Ribosomal protein</keyword>
<keyword id="KW-0694">RNA-binding</keyword>
<keyword id="KW-0699">rRNA-binding</keyword>
<reference key="1">
    <citation type="submission" date="2005-08" db="EMBL/GenBank/DDBJ databases">
        <title>Complete sequence of Synechococcus sp. CC9902.</title>
        <authorList>
            <person name="Copeland A."/>
            <person name="Lucas S."/>
            <person name="Lapidus A."/>
            <person name="Barry K."/>
            <person name="Detter J.C."/>
            <person name="Glavina T."/>
            <person name="Hammon N."/>
            <person name="Israni S."/>
            <person name="Pitluck S."/>
            <person name="Martinez M."/>
            <person name="Schmutz J."/>
            <person name="Larimer F."/>
            <person name="Land M."/>
            <person name="Kyrpides N."/>
            <person name="Ivanova N."/>
            <person name="Richardson P."/>
        </authorList>
    </citation>
    <scope>NUCLEOTIDE SEQUENCE [LARGE SCALE GENOMIC DNA]</scope>
    <source>
        <strain>CC9902</strain>
    </source>
</reference>
<evidence type="ECO:0000255" key="1">
    <source>
        <dbReference type="HAMAP-Rule" id="MF_01367"/>
    </source>
</evidence>
<evidence type="ECO:0000305" key="2"/>
<sequence>MIQQESFLTVADNSGAKRIQCIRVLGTNRRYAHVGDVIVAAVKDAMPNMGVKKSDVVKAVVVRTKATLRRETGNSIRFDDNAAVIINDDKNPKGTRVFGPVARELRERSFTKIVSLAPEVI</sequence>
<accession>Q3AW83</accession>
<name>RL14_SYNS9</name>
<gene>
    <name evidence="1" type="primary">rplN</name>
    <name evidence="1" type="synonym">rpl14</name>
    <name type="ordered locus">Syncc9902_1965</name>
</gene>
<proteinExistence type="inferred from homology"/>
<comment type="function">
    <text evidence="1">Binds to 23S rRNA. Forms part of two intersubunit bridges in the 70S ribosome.</text>
</comment>
<comment type="subunit">
    <text evidence="1">Part of the 50S ribosomal subunit. Forms a cluster with proteins L3 and L19. In the 70S ribosome, L14 and L19 interact and together make contacts with the 16S rRNA in bridges B5 and B8.</text>
</comment>
<comment type="similarity">
    <text evidence="1">Belongs to the universal ribosomal protein uL14 family.</text>
</comment>
<dbReference type="EMBL" id="CP000097">
    <property type="protein sequence ID" value="ABB26923.1"/>
    <property type="molecule type" value="Genomic_DNA"/>
</dbReference>
<dbReference type="RefSeq" id="WP_006169852.1">
    <property type="nucleotide sequence ID" value="NC_007513.1"/>
</dbReference>
<dbReference type="SMR" id="Q3AW83"/>
<dbReference type="STRING" id="316279.Syncc9902_1965"/>
<dbReference type="KEGG" id="sye:Syncc9902_1965"/>
<dbReference type="eggNOG" id="COG0093">
    <property type="taxonomic scope" value="Bacteria"/>
</dbReference>
<dbReference type="HOGENOM" id="CLU_095071_2_1_3"/>
<dbReference type="OrthoDB" id="9806379at2"/>
<dbReference type="Proteomes" id="UP000002712">
    <property type="component" value="Chromosome"/>
</dbReference>
<dbReference type="GO" id="GO:0022625">
    <property type="term" value="C:cytosolic large ribosomal subunit"/>
    <property type="evidence" value="ECO:0007669"/>
    <property type="project" value="TreeGrafter"/>
</dbReference>
<dbReference type="GO" id="GO:0070180">
    <property type="term" value="F:large ribosomal subunit rRNA binding"/>
    <property type="evidence" value="ECO:0007669"/>
    <property type="project" value="TreeGrafter"/>
</dbReference>
<dbReference type="GO" id="GO:0003735">
    <property type="term" value="F:structural constituent of ribosome"/>
    <property type="evidence" value="ECO:0007669"/>
    <property type="project" value="InterPro"/>
</dbReference>
<dbReference type="GO" id="GO:0006412">
    <property type="term" value="P:translation"/>
    <property type="evidence" value="ECO:0007669"/>
    <property type="project" value="UniProtKB-UniRule"/>
</dbReference>
<dbReference type="CDD" id="cd00337">
    <property type="entry name" value="Ribosomal_uL14"/>
    <property type="match status" value="1"/>
</dbReference>
<dbReference type="FunFam" id="2.40.150.20:FF:000001">
    <property type="entry name" value="50S ribosomal protein L14"/>
    <property type="match status" value="1"/>
</dbReference>
<dbReference type="Gene3D" id="2.40.150.20">
    <property type="entry name" value="Ribosomal protein L14"/>
    <property type="match status" value="1"/>
</dbReference>
<dbReference type="HAMAP" id="MF_01367">
    <property type="entry name" value="Ribosomal_uL14"/>
    <property type="match status" value="1"/>
</dbReference>
<dbReference type="InterPro" id="IPR000218">
    <property type="entry name" value="Ribosomal_uL14"/>
</dbReference>
<dbReference type="InterPro" id="IPR005745">
    <property type="entry name" value="Ribosomal_uL14_bac-type"/>
</dbReference>
<dbReference type="InterPro" id="IPR036853">
    <property type="entry name" value="Ribosomal_uL14_sf"/>
</dbReference>
<dbReference type="NCBIfam" id="TIGR01067">
    <property type="entry name" value="rplN_bact"/>
    <property type="match status" value="1"/>
</dbReference>
<dbReference type="PANTHER" id="PTHR11761">
    <property type="entry name" value="50S/60S RIBOSOMAL PROTEIN L14/L23"/>
    <property type="match status" value="1"/>
</dbReference>
<dbReference type="PANTHER" id="PTHR11761:SF3">
    <property type="entry name" value="LARGE RIBOSOMAL SUBUNIT PROTEIN UL14M"/>
    <property type="match status" value="1"/>
</dbReference>
<dbReference type="Pfam" id="PF00238">
    <property type="entry name" value="Ribosomal_L14"/>
    <property type="match status" value="1"/>
</dbReference>
<dbReference type="SMART" id="SM01374">
    <property type="entry name" value="Ribosomal_L14"/>
    <property type="match status" value="1"/>
</dbReference>
<dbReference type="SUPFAM" id="SSF50193">
    <property type="entry name" value="Ribosomal protein L14"/>
    <property type="match status" value="1"/>
</dbReference>
<organism>
    <name type="scientific">Synechococcus sp. (strain CC9902)</name>
    <dbReference type="NCBI Taxonomy" id="316279"/>
    <lineage>
        <taxon>Bacteria</taxon>
        <taxon>Bacillati</taxon>
        <taxon>Cyanobacteriota</taxon>
        <taxon>Cyanophyceae</taxon>
        <taxon>Synechococcales</taxon>
        <taxon>Synechococcaceae</taxon>
        <taxon>Synechococcus</taxon>
    </lineage>
</organism>
<feature type="chain" id="PRO_1000055738" description="Large ribosomal subunit protein uL14">
    <location>
        <begin position="1"/>
        <end position="121"/>
    </location>
</feature>
<protein>
    <recommendedName>
        <fullName evidence="1">Large ribosomal subunit protein uL14</fullName>
    </recommendedName>
    <alternativeName>
        <fullName evidence="2">50S ribosomal protein L14</fullName>
    </alternativeName>
</protein>